<dbReference type="EC" id="1.1.1.247" evidence="4 11"/>
<dbReference type="EMBL" id="AF108434">
    <property type="protein sequence ID" value="AAF13738.1"/>
    <property type="molecule type" value="mRNA"/>
</dbReference>
<dbReference type="EMBL" id="PUWZ01000000">
    <property type="status" value="NOT_ANNOTATED_CDS"/>
    <property type="molecule type" value="Genomic_DNA"/>
</dbReference>
<dbReference type="PDB" id="7MBF">
    <property type="method" value="X-ray"/>
    <property type="resolution" value="2.40 A"/>
    <property type="chains" value="A/B/C/D/E/F=1-321"/>
</dbReference>
<dbReference type="PDBsum" id="7MBF"/>
<dbReference type="SMR" id="Q9SQ68"/>
<dbReference type="UniPathway" id="UPA00852"/>
<dbReference type="Proteomes" id="UP000316621">
    <property type="component" value="Unassembled WGS sequence"/>
</dbReference>
<dbReference type="GO" id="GO:0005829">
    <property type="term" value="C:cytosol"/>
    <property type="evidence" value="ECO:0000314"/>
    <property type="project" value="UniProtKB"/>
</dbReference>
<dbReference type="GO" id="GO:0047036">
    <property type="term" value="F:codeinone reductase (NADPH) activity"/>
    <property type="evidence" value="ECO:0000314"/>
    <property type="project" value="UniProtKB"/>
</dbReference>
<dbReference type="GO" id="GO:0016491">
    <property type="term" value="F:oxidoreductase activity"/>
    <property type="evidence" value="ECO:0000314"/>
    <property type="project" value="UniProtKB"/>
</dbReference>
<dbReference type="GO" id="GO:2001291">
    <property type="term" value="P:codeine metabolic process"/>
    <property type="evidence" value="ECO:0000314"/>
    <property type="project" value="UniProtKB"/>
</dbReference>
<dbReference type="GO" id="GO:0071272">
    <property type="term" value="P:morphine metabolic process"/>
    <property type="evidence" value="ECO:0000314"/>
    <property type="project" value="UniProtKB"/>
</dbReference>
<dbReference type="CDD" id="cd19124">
    <property type="entry name" value="AKR_AKR4A_4B"/>
    <property type="match status" value="1"/>
</dbReference>
<dbReference type="FunFam" id="3.20.20.100:FF:000013">
    <property type="entry name" value="NADPH-dependent codeinone reductase 1-1"/>
    <property type="match status" value="1"/>
</dbReference>
<dbReference type="Gene3D" id="3.20.20.100">
    <property type="entry name" value="NADP-dependent oxidoreductase domain"/>
    <property type="match status" value="1"/>
</dbReference>
<dbReference type="InterPro" id="IPR020471">
    <property type="entry name" value="AKR"/>
</dbReference>
<dbReference type="InterPro" id="IPR044497">
    <property type="entry name" value="AKR4A/B"/>
</dbReference>
<dbReference type="InterPro" id="IPR018170">
    <property type="entry name" value="Aldo/ket_reductase_CS"/>
</dbReference>
<dbReference type="InterPro" id="IPR023210">
    <property type="entry name" value="NADP_OxRdtase_dom"/>
</dbReference>
<dbReference type="InterPro" id="IPR036812">
    <property type="entry name" value="NADP_OxRdtase_dom_sf"/>
</dbReference>
<dbReference type="PANTHER" id="PTHR11732">
    <property type="entry name" value="ALDO/KETO REDUCTASE"/>
    <property type="match status" value="1"/>
</dbReference>
<dbReference type="Pfam" id="PF00248">
    <property type="entry name" value="Aldo_ket_red"/>
    <property type="match status" value="1"/>
</dbReference>
<dbReference type="PIRSF" id="PIRSF000097">
    <property type="entry name" value="AKR"/>
    <property type="match status" value="1"/>
</dbReference>
<dbReference type="PRINTS" id="PR00069">
    <property type="entry name" value="ALDKETRDTASE"/>
</dbReference>
<dbReference type="SUPFAM" id="SSF51430">
    <property type="entry name" value="NAD(P)-linked oxidoreductase"/>
    <property type="match status" value="1"/>
</dbReference>
<dbReference type="PROSITE" id="PS00798">
    <property type="entry name" value="ALDOKETO_REDUCTASE_1"/>
    <property type="match status" value="1"/>
</dbReference>
<dbReference type="PROSITE" id="PS00062">
    <property type="entry name" value="ALDOKETO_REDUCTASE_2"/>
    <property type="match status" value="1"/>
</dbReference>
<dbReference type="PROSITE" id="PS00063">
    <property type="entry name" value="ALDOKETO_REDUCTASE_3"/>
    <property type="match status" value="1"/>
</dbReference>
<keyword id="KW-0002">3D-structure</keyword>
<keyword id="KW-0017">Alkaloid metabolism</keyword>
<keyword id="KW-0963">Cytoplasm</keyword>
<keyword id="KW-0903">Direct protein sequencing</keyword>
<keyword id="KW-0521">NADP</keyword>
<keyword id="KW-0560">Oxidoreductase</keyword>
<keyword id="KW-1185">Reference proteome</keyword>
<name>COR13_PAPSO</name>
<gene>
    <name evidence="14" type="primary">COR1.3</name>
</gene>
<feature type="chain" id="PRO_0000418593" description="NADPH-dependent codeinone reductase 1-3">
    <location>
        <begin position="1"/>
        <end position="321"/>
    </location>
</feature>
<feature type="region of interest" description="Disordered" evidence="3">
    <location>
        <begin position="300"/>
        <end position="321"/>
    </location>
</feature>
<feature type="active site" description="Proton donor" evidence="1">
    <location>
        <position position="56"/>
    </location>
</feature>
<feature type="active site" description="Proton donor" evidence="2">
    <location>
        <position position="119"/>
    </location>
</feature>
<feature type="binding site" evidence="2">
    <location>
        <position position="27"/>
    </location>
    <ligand>
        <name>NADPH</name>
        <dbReference type="ChEBI" id="CHEBI:57783"/>
    </ligand>
</feature>
<feature type="binding site" evidence="2">
    <location>
        <position position="51"/>
    </location>
    <ligand>
        <name>NADPH</name>
        <dbReference type="ChEBI" id="CHEBI:57783"/>
    </ligand>
</feature>
<feature type="binding site" evidence="1">
    <location>
        <position position="119"/>
    </location>
    <ligand>
        <name>substrate</name>
    </ligand>
</feature>
<feature type="binding site" evidence="2">
    <location>
        <position position="187"/>
    </location>
    <ligand>
        <name>NADPH</name>
        <dbReference type="ChEBI" id="CHEBI:57783"/>
    </ligand>
</feature>
<feature type="binding site" evidence="2">
    <location>
        <position position="214"/>
    </location>
    <ligand>
        <name>NADPH</name>
        <dbReference type="ChEBI" id="CHEBI:57783"/>
    </ligand>
</feature>
<feature type="binding site" evidence="2">
    <location>
        <position position="216"/>
    </location>
    <ligand>
        <name>NADPH</name>
        <dbReference type="ChEBI" id="CHEBI:57783"/>
    </ligand>
</feature>
<feature type="binding site" evidence="2">
    <location>
        <position position="264"/>
    </location>
    <ligand>
        <name>NADPH</name>
        <dbReference type="ChEBI" id="CHEBI:57783"/>
    </ligand>
</feature>
<feature type="binding site" evidence="2">
    <location>
        <position position="269"/>
    </location>
    <ligand>
        <name>NADPH</name>
        <dbReference type="ChEBI" id="CHEBI:57783"/>
    </ligand>
</feature>
<feature type="site" description="Lowers pKa of active site Tyr" evidence="2">
    <location>
        <position position="86"/>
    </location>
</feature>
<feature type="mutagenesis site" description="Reduced codeinone reductase activity." evidence="13">
    <original>M</original>
    <variation>E</variation>
    <variation>L</variation>
    <location>
        <position position="28"/>
    </location>
</feature>
<feature type="mutagenesis site" description="Lost oxidase activity and strongly reduced reductase activity." evidence="13">
    <original>D</original>
    <variation>N</variation>
    <location>
        <position position="51"/>
    </location>
</feature>
<feature type="mutagenesis site" description="Lost oxidase activity and strongly reduced reductase activity." evidence="13">
    <original>K</original>
    <variation>M</variation>
    <location>
        <position position="86"/>
    </location>
</feature>
<feature type="mutagenesis site" description="Reduced codeinone reductase activity." evidence="13">
    <original>W</original>
    <variation>H</variation>
    <location>
        <position position="88"/>
    </location>
</feature>
<feature type="mutagenesis site" description="Lost oxidase activity and strongly reduced reductase activity." evidence="13">
    <original>H</original>
    <variation>F</variation>
    <location>
        <position position="119"/>
    </location>
</feature>
<feature type="mutagenesis site" description="Increased accumulation of neopine." evidence="13">
    <original>H</original>
    <variation>F</variation>
    <location>
        <position position="120"/>
    </location>
</feature>
<feature type="mutagenesis site" description="Strongly reduced codeinone reductase activity." evidence="13">
    <original>H</original>
    <variation>P</variation>
    <location>
        <position position="120"/>
    </location>
</feature>
<feature type="mutagenesis site" description="Reduced codeinone reductase activity." evidence="13">
    <original>H</original>
    <variation>W</variation>
    <location>
        <position position="120"/>
    </location>
</feature>
<feature type="mutagenesis site" description="Increased accumulation of neopine." evidence="13">
    <original>N</original>
    <variation>L</variation>
    <location>
        <position position="131"/>
    </location>
</feature>
<feature type="mutagenesis site" description="Slightly increased accumulation of neopine." evidence="13">
    <original>E</original>
    <variation>L</variation>
    <location>
        <position position="132"/>
    </location>
</feature>
<feature type="mutagenesis site" description="Reduced oxidase and reductase activities. Strongly reduced reductase activity; when associated with A-302." evidence="13">
    <original>W</original>
    <variation>A</variation>
    <location>
        <position position="223"/>
    </location>
</feature>
<feature type="mutagenesis site" description="Reduced reductase activity. Strongly reduced reductase activity; when associated with A-223." evidence="13">
    <original>F</original>
    <variation>A</variation>
    <location>
        <position position="302"/>
    </location>
</feature>
<feature type="mutagenesis site" description="Reduced codeinone reductase activity." evidence="13">
    <original>F</original>
    <variation>L</variation>
    <location>
        <position position="302"/>
    </location>
</feature>
<feature type="strand" evidence="16">
    <location>
        <begin position="8"/>
        <end position="10"/>
    </location>
</feature>
<feature type="strand" evidence="16">
    <location>
        <begin position="16"/>
        <end position="23"/>
    </location>
</feature>
<feature type="helix" evidence="16">
    <location>
        <begin position="33"/>
        <end position="45"/>
    </location>
</feature>
<feature type="strand" evidence="16">
    <location>
        <begin position="49"/>
        <end position="51"/>
    </location>
</feature>
<feature type="helix" evidence="16">
    <location>
        <begin position="54"/>
        <end position="56"/>
    </location>
</feature>
<feature type="helix" evidence="16">
    <location>
        <begin position="59"/>
        <end position="71"/>
    </location>
</feature>
<feature type="strand" evidence="16">
    <location>
        <begin position="74"/>
        <end position="76"/>
    </location>
</feature>
<feature type="helix" evidence="16">
    <location>
        <begin position="78"/>
        <end position="80"/>
    </location>
</feature>
<feature type="strand" evidence="16">
    <location>
        <begin position="82"/>
        <end position="87"/>
    </location>
</feature>
<feature type="helix" evidence="16">
    <location>
        <begin position="89"/>
        <end position="91"/>
    </location>
</feature>
<feature type="helix" evidence="16">
    <location>
        <begin position="94"/>
        <end position="96"/>
    </location>
</feature>
<feature type="helix" evidence="16">
    <location>
        <begin position="97"/>
        <end position="107"/>
    </location>
</feature>
<feature type="strand" evidence="16">
    <location>
        <begin position="113"/>
        <end position="118"/>
    </location>
</feature>
<feature type="helix" evidence="16">
    <location>
        <begin position="135"/>
        <end position="137"/>
    </location>
</feature>
<feature type="helix" evidence="16">
    <location>
        <begin position="143"/>
        <end position="155"/>
    </location>
</feature>
<feature type="strand" evidence="16">
    <location>
        <begin position="158"/>
        <end position="160"/>
    </location>
</feature>
<feature type="strand" evidence="16">
    <location>
        <begin position="162"/>
        <end position="166"/>
    </location>
</feature>
<feature type="helix" evidence="16">
    <location>
        <begin position="169"/>
        <end position="175"/>
    </location>
</feature>
<feature type="strand" evidence="16">
    <location>
        <begin position="176"/>
        <end position="178"/>
    </location>
</feature>
<feature type="strand" evidence="16">
    <location>
        <begin position="184"/>
        <end position="189"/>
    </location>
</feature>
<feature type="helix" evidence="16">
    <location>
        <begin position="197"/>
        <end position="205"/>
    </location>
</feature>
<feature type="strand" evidence="16">
    <location>
        <begin position="209"/>
        <end position="213"/>
    </location>
</feature>
<feature type="turn" evidence="16">
    <location>
        <begin position="227"/>
        <end position="230"/>
    </location>
</feature>
<feature type="helix" evidence="16">
    <location>
        <begin position="232"/>
        <end position="240"/>
    </location>
</feature>
<feature type="helix" evidence="16">
    <location>
        <begin position="245"/>
        <end position="255"/>
    </location>
</feature>
<feature type="strand" evidence="16">
    <location>
        <begin position="259"/>
        <end position="262"/>
    </location>
</feature>
<feature type="helix" evidence="16">
    <location>
        <begin position="267"/>
        <end position="273"/>
    </location>
</feature>
<feature type="helix" evidence="16">
    <location>
        <begin position="274"/>
        <end position="277"/>
    </location>
</feature>
<feature type="helix" evidence="16">
    <location>
        <begin position="283"/>
        <end position="290"/>
    </location>
</feature>
<feature type="helix" evidence="16">
    <location>
        <begin position="301"/>
        <end position="303"/>
    </location>
</feature>
<feature type="helix" evidence="16">
    <location>
        <begin position="313"/>
        <end position="317"/>
    </location>
</feature>
<accession>Q9SQ68</accession>
<protein>
    <recommendedName>
        <fullName evidence="14">NADPH-dependent codeinone reductase 1-3</fullName>
        <shortName evidence="15">PsCor1.3</shortName>
        <ecNumber evidence="4 11">1.1.1.247</ecNumber>
    </recommendedName>
</protein>
<organism>
    <name type="scientific">Papaver somniferum</name>
    <name type="common">Opium poppy</name>
    <dbReference type="NCBI Taxonomy" id="3469"/>
    <lineage>
        <taxon>Eukaryota</taxon>
        <taxon>Viridiplantae</taxon>
        <taxon>Streptophyta</taxon>
        <taxon>Embryophyta</taxon>
        <taxon>Tracheophyta</taxon>
        <taxon>Spermatophyta</taxon>
        <taxon>Magnoliopsida</taxon>
        <taxon>Ranunculales</taxon>
        <taxon>Papaveraceae</taxon>
        <taxon>Papaveroideae</taxon>
        <taxon>Papaver</taxon>
    </lineage>
</organism>
<evidence type="ECO:0000250" key="1">
    <source>
        <dbReference type="UniProtKB" id="P06632"/>
    </source>
</evidence>
<evidence type="ECO:0000250" key="2">
    <source>
        <dbReference type="UniProtKB" id="Q76L36"/>
    </source>
</evidence>
<evidence type="ECO:0000256" key="3">
    <source>
        <dbReference type="SAM" id="MobiDB-lite"/>
    </source>
</evidence>
<evidence type="ECO:0000269" key="4">
    <source>
    </source>
</evidence>
<evidence type="ECO:0000269" key="5">
    <source>
    </source>
</evidence>
<evidence type="ECO:0000269" key="6">
    <source>
    </source>
</evidence>
<evidence type="ECO:0000269" key="7">
    <source>
    </source>
</evidence>
<evidence type="ECO:0000269" key="8">
    <source>
    </source>
</evidence>
<evidence type="ECO:0000269" key="9">
    <source>
    </source>
</evidence>
<evidence type="ECO:0000269" key="10">
    <source>
    </source>
</evidence>
<evidence type="ECO:0000269" key="11">
    <source>
    </source>
</evidence>
<evidence type="ECO:0000269" key="12">
    <source>
    </source>
</evidence>
<evidence type="ECO:0000269" key="13">
    <source>
    </source>
</evidence>
<evidence type="ECO:0000303" key="14">
    <source>
    </source>
</evidence>
<evidence type="ECO:0000305" key="15"/>
<evidence type="ECO:0007829" key="16">
    <source>
        <dbReference type="PDB" id="7MBF"/>
    </source>
</evidence>
<sequence>MESNGVPMITLSSGIRMPALGMGTAETMVKGTEREKLAFLKAIEVGYRHFDTAAAYQSEECLGEAIAEALQLGLIKSRDELFITSKLWCADAHADLVLPALQNSLRNLKLDYLDLYLIHHPVSLKPGKFVNEIPKDHILPMDYKSVWAAMEECQTLGFTRAIGVCNFSCKKLQELMAAAKIPPVVNQVEMSPTLHQKNLREYCKANNIMITAHSVLGAICAPWGSNAVMDSKVLHQIAVARGKSVAQVSMRWVYQQGASLVVKSFNEGRMKENLKIFDWELTAENMEKISEIPQSRTSSADFLLSPTGPFKTEEEFWDEKD</sequence>
<proteinExistence type="evidence at protein level"/>
<reference key="1">
    <citation type="journal article" date="1999" name="Plant J.">
        <title>Molecular cloning and functional expression of codeinone reductase: the penultimate enzyme in morphine biosynthesis in the opium poppy Papaver somniferum.</title>
        <authorList>
            <person name="Unterlinner B."/>
            <person name="Lenz R."/>
            <person name="Kutchan T.M."/>
        </authorList>
    </citation>
    <scope>NUCLEOTIDE SEQUENCE [MRNA]</scope>
    <scope>PROTEIN SEQUENCE OF 130-135; 172-177; 233-243 AND 245-248</scope>
    <scope>FUNCTION</scope>
    <scope>BIOPHYSICOCHEMICAL PROPERTIES</scope>
    <scope>TISSUE SPECIFICITY</scope>
    <scope>CATALYTIC ACTIVITY</scope>
    <scope>PATHWAY</scope>
</reference>
<reference key="2">
    <citation type="journal article" date="2018" name="Science">
        <title>The opium poppy genome and morphinan production.</title>
        <authorList>
            <person name="Guo L."/>
            <person name="Winzer T."/>
            <person name="Yang X."/>
            <person name="Li Y."/>
            <person name="Ning Z."/>
            <person name="He Z."/>
            <person name="Teodor R."/>
            <person name="Lu Y."/>
            <person name="Bowser T.A."/>
            <person name="Graham I.A."/>
            <person name="Ye K."/>
        </authorList>
    </citation>
    <scope>NUCLEOTIDE SEQUENCE [LARGE SCALE GENOMIC DNA]</scope>
    <source>
        <strain>cv. HN1</strain>
        <tissue>Leaf</tissue>
    </source>
</reference>
<reference key="3">
    <citation type="journal article" date="2000" name="Electrophoresis">
        <title>Characterization of proteins in latex of the opium poppy (Papaver somniferum) using two-dimensional gel electrophoresis and microsequencing.</title>
        <authorList>
            <person name="Decker G."/>
            <person name="Wanner G."/>
            <person name="Zenk M.H."/>
            <person name="Lottspeich F."/>
        </authorList>
    </citation>
    <scope>IDENTIFICATION BY MASS SPECTROMETRY</scope>
    <scope>SUBCELLULAR LOCATION</scope>
    <scope>TISSUE SPECIFICITY</scope>
</reference>
<reference key="4">
    <citation type="journal article" date="2003" name="Plant Cell">
        <title>A tale of three cell types: alkaloid biosynthesis is localized to sieve elements in opium poppy.</title>
        <authorList>
            <person name="Bird D.A."/>
            <person name="Franceschi V.R."/>
            <person name="Facchini P.J."/>
        </authorList>
    </citation>
    <scope>TISSUE SPECIFICITY</scope>
    <scope>SUBCELLULAR LOCATION</scope>
</reference>
<reference key="5">
    <citation type="journal article" date="2004" name="Nat. Biotechnol.">
        <title>RNAi-mediated replacement of morphine with the nonnarcotic alkaloid reticuline in opium poppy.</title>
        <authorList>
            <person name="Allen R.S."/>
            <person name="Millgate A.G."/>
            <person name="Chitty J.A."/>
            <person name="Thisleton J."/>
            <person name="Miller J.A."/>
            <person name="Fist A.J."/>
            <person name="Gerlach W.L."/>
            <person name="Larkin P.J."/>
        </authorList>
    </citation>
    <scope>FUNCTION</scope>
    <scope>DISRUPTION PHENOTYPE</scope>
</reference>
<reference key="6">
    <citation type="journal article" date="2004" name="Proc. Natl. Acad. Sci. U.S.A.">
        <title>The roles of latex and the vascular bundle in morphine biosynthesis in the opium poppy, Papaver somniferum.</title>
        <authorList>
            <person name="Weid M."/>
            <person name="Ziegler J."/>
            <person name="Kutchan T.M."/>
        </authorList>
    </citation>
    <scope>TISSUE SPECIFICITY</scope>
</reference>
<reference key="7">
    <citation type="journal article" date="2006" name="Plant J.">
        <title>The role of phloem sieve elements and laticifers in the biosynthesis and accumulation of alkaloids in opium poppy.</title>
        <authorList>
            <person name="Samanani N."/>
            <person name="Alcantara J."/>
            <person name="Bourgault R."/>
            <person name="Zulak K.G."/>
            <person name="Facchini P.J."/>
        </authorList>
    </citation>
    <scope>DEVELOPMENTAL STAGE</scope>
    <source>
        <strain>cv. Louisiana</strain>
        <strain>cv. Marianne</strain>
    </source>
</reference>
<reference key="8">
    <citation type="journal article" date="2012" name="Plant J.">
        <title>Systematic knockdown of morphine pathway enzymes in opium poppy using virus-induced gene silencing.</title>
        <authorList>
            <person name="Wijekoon C.P."/>
            <person name="Facchini P.J."/>
        </authorList>
    </citation>
    <scope>FUNCTION</scope>
    <scope>DISRUPTION PHENOTYPE</scope>
    <scope>CATALYTIC ACTIVITY</scope>
</reference>
<reference key="9">
    <citation type="journal article" date="2018" name="J. Biosci.">
        <title>Spatiotemporal oscillations of morphinan alkaloids in opium poppy.</title>
        <authorList>
            <person name="Rezaei M."/>
            <person name="Naghavi M.R."/>
            <person name="Hosseinzadeh A."/>
            <person name="Abasi A."/>
            <person name="Nasiri J."/>
        </authorList>
    </citation>
    <scope>TISSUE SPECIFICITY</scope>
    <scope>DEVELOPMENTAL STAGE</scope>
</reference>
<reference key="10">
    <citation type="journal article" date="2018" name="Plant J.">
        <title>Codeinone reductase isoforms with differential stability, efficiency and product selectivity in opium poppy.</title>
        <authorList>
            <person name="Dastmalchi M."/>
            <person name="Chang L."/>
            <person name="Torres M.A."/>
            <person name="Ng K.K.S."/>
            <person name="Facchini P.J."/>
        </authorList>
    </citation>
    <scope>FUNCTION</scope>
    <scope>CATALYTIC ACTIVITY</scope>
    <scope>BIOPHYSICOCHEMICAL PROPERTIES</scope>
    <scope>BIOTECHNOLOGY</scope>
    <scope>PATHWAY</scope>
</reference>
<reference key="11">
    <citation type="journal article" date="2021" name="J. Biol. Chem.">
        <title>Structural studies of codeinone reductase reveal novel insights into aldo-keto reductase function in benzylisoquinoline alkaloid biosynthesis.</title>
        <authorList>
            <person name="Carr S.C."/>
            <person name="Torres M.A."/>
            <person name="Morris J.S."/>
            <person name="Facchini P.J."/>
            <person name="Ng K.K.S."/>
        </authorList>
    </citation>
    <scope>X-RAY CRYSTALLOGRAPHY (2.40 ANGSTROMS)</scope>
    <scope>MUTAGENESIS OF MET-28; ASP-51; LYS-86; TRP-88; HIS-119; HIS-120; ASN-131; GLU-132; TRP-223 AND PHE-302</scope>
</reference>
<comment type="function">
    <text evidence="4 8 10 11">NADPH-dependent codeinone reductase involved in biosynthesis of morphinan-type benzylisoquinoline and opiate alkaloids natural products (PubMed:10417697, PubMed:15543134, PubMed:29779229). Reduces codeinone to codeine in the penultimate step in morphine biosynthesis (PubMed:10417697, PubMed:15543134, PubMed:22098111). Can use morphinone, hydrocodone and hydromorphone as substrate during reductive reaction with NADPH as cofactor, and morphine and dihydrocodeine as substrate during oxidative reaction with NADP as cofactor (PubMed:10417697). Converts morphinone to morphine, and neomorphinone to neomorphine (PubMed:29779229). Reduces irreversibly neopinone, a spontaneous isomer of codeinone, to neopine; in planta, neopine levels are limited to low levels (PubMed:29779229).</text>
</comment>
<comment type="catalytic activity">
    <reaction evidence="4 10 11">
        <text>codeine + NADP(+) = codeinone + NADPH + H(+)</text>
        <dbReference type="Rhea" id="RHEA:19209"/>
        <dbReference type="ChEBI" id="CHEBI:15378"/>
        <dbReference type="ChEBI" id="CHEBI:57783"/>
        <dbReference type="ChEBI" id="CHEBI:57871"/>
        <dbReference type="ChEBI" id="CHEBI:58349"/>
        <dbReference type="ChEBI" id="CHEBI:58473"/>
        <dbReference type="EC" id="1.1.1.247"/>
    </reaction>
    <physiologicalReaction direction="left-to-right" evidence="11">
        <dbReference type="Rhea" id="RHEA:19210"/>
    </physiologicalReaction>
    <physiologicalReaction direction="right-to-left" evidence="4 11">
        <dbReference type="Rhea" id="RHEA:19211"/>
    </physiologicalReaction>
</comment>
<comment type="catalytic activity">
    <reaction evidence="11">
        <text>neopine + NADP(+) = neopinone + NADPH + H(+)</text>
        <dbReference type="Rhea" id="RHEA:75135"/>
        <dbReference type="ChEBI" id="CHEBI:15378"/>
        <dbReference type="ChEBI" id="CHEBI:57783"/>
        <dbReference type="ChEBI" id="CHEBI:58349"/>
        <dbReference type="ChEBI" id="CHEBI:59950"/>
        <dbReference type="ChEBI" id="CHEBI:194190"/>
        <dbReference type="EC" id="1.1.1.247"/>
    </reaction>
    <physiologicalReaction direction="right-to-left" evidence="11">
        <dbReference type="Rhea" id="RHEA:75137"/>
    </physiologicalReaction>
</comment>
<comment type="catalytic activity">
    <reaction evidence="4 11">
        <text>morphine + NADP(+) = morphinone + NADPH + H(+)</text>
        <dbReference type="Rhea" id="RHEA:14321"/>
        <dbReference type="ChEBI" id="CHEBI:15378"/>
        <dbReference type="ChEBI" id="CHEBI:57728"/>
        <dbReference type="ChEBI" id="CHEBI:57783"/>
        <dbReference type="ChEBI" id="CHEBI:58097"/>
        <dbReference type="ChEBI" id="CHEBI:58349"/>
    </reaction>
    <physiologicalReaction direction="left-to-right" evidence="4">
        <dbReference type="Rhea" id="RHEA:14322"/>
    </physiologicalReaction>
    <physiologicalReaction direction="right-to-left" evidence="4 11">
        <dbReference type="Rhea" id="RHEA:14323"/>
    </physiologicalReaction>
</comment>
<comment type="catalytic activity">
    <reaction evidence="11">
        <text>neomorphine + NADP(+) = neomorphinone + NADPH + H(+)</text>
        <dbReference type="Rhea" id="RHEA:75971"/>
        <dbReference type="ChEBI" id="CHEBI:15378"/>
        <dbReference type="ChEBI" id="CHEBI:57783"/>
        <dbReference type="ChEBI" id="CHEBI:58349"/>
        <dbReference type="ChEBI" id="CHEBI:194188"/>
        <dbReference type="ChEBI" id="CHEBI:194513"/>
    </reaction>
    <physiologicalReaction direction="right-to-left" evidence="11">
        <dbReference type="Rhea" id="RHEA:75973"/>
    </physiologicalReaction>
</comment>
<comment type="biophysicochemical properties">
    <kinetics>
        <KM evidence="4">187 uM for codeine (at pH 9.0 and 30 degrees Celsius)</KM>
        <KM evidence="4">48 uM for codeinone (at pH 9.0 and 30 degrees Celsius)</KM>
        <KM evidence="4">205 uM for NADPH (at pH 9.0 and 30 degrees Celsius)</KM>
        <KM evidence="4">45 uM for NADP (at pH 9.0 and 30 degrees Celsius)</KM>
        <KM evidence="4">200 uM for morphine (at pH 9.0 and 30 degrees Celsius)</KM>
        <KM evidence="4">628 uM for dihydrocodeine (at pH 9.0 and 30 degrees Celsius)</KM>
        <KM evidence="4">143 uM for morphinone (at pH 9.0 and 30 degrees Celsius)</KM>
        <KM evidence="4">55 uM for hydrocodone (at pH 9.0 and 30 degrees Celsius)</KM>
        <KM evidence="4">90 uM for hydromorphone (at pH 9.0 and 30 degrees Celsius)</KM>
        <KM evidence="11">18.3 uM for codeinone</KM>
        <KM evidence="11">29.8 uM for codeine</KM>
        <KM evidence="11">64.8 uM for NADPH</KM>
        <KM evidence="11">69.7 uM for NADP(+)</KM>
        <Vmax evidence="11">67.2 nmol/min/mg enzyme with codeinone as substrate</Vmax>
        <Vmax evidence="11">25.2 nmol/min/mg enzyme with codeine as substrate</Vmax>
        <Vmax evidence="11">100.6 nmol/min/mg enzyme with NADPH as substrate</Vmax>
        <Vmax evidence="11">73.7 nmol/min/mg enzyme with NADP(+) as substrate</Vmax>
        <text evidence="11">kcat is 0.040 sec(-1) with codeinone as substrate (PubMed:29779229). kcat is 0.015 sec(-1) with codeine as substrate (PubMed:29779229). kcat is 0.060 sec(-1) with NADPH as substrate (PubMed:29779229). kcat is 0.044 sec(-1) with NADP(+) as substrate (PubMed:29779229).</text>
    </kinetics>
    <phDependence>
        <text evidence="4 11">Optimum pH is 6.8 for reduction (forward reaction) of codeinone to codeine and 9.0 for the oxidation (reverse reaction) of codeine to codeinone.</text>
    </phDependence>
    <temperatureDependence>
        <text evidence="4 11">Optimum temperature is 28 degrees Celsius for reduction (forward reaction) and 30 degrees Celsius for reduction (reverse reaction).</text>
    </temperatureDependence>
</comment>
<comment type="pathway">
    <text evidence="4 11">Alkaloid biosynthesis; morphine biosynthesis.</text>
</comment>
<comment type="subcellular location">
    <subcellularLocation>
        <location evidence="5">Cytoplasm</location>
        <location evidence="5">Cytosol</location>
    </subcellularLocation>
    <text evidence="5 6">Present in the cytosolic part of laticifer cells that secrete latex (PubMed:11079569). Localized to the parietal region of the sieve element cytoplasm (PubMed:14508000).</text>
</comment>
<comment type="tissue specificity">
    <text evidence="4 5 6 7 12">Latex secreting cells (laticifer cells). Expressed constitutively in all organs with highest levels in capsules (PubMed:15353584, PubMed:29872026). Restricted to the parietal region of sieve elements adjacent or proximal to laticifers in roots, stems, leaves and carpels (PubMed:14508000).</text>
</comment>
<comment type="developmental stage">
    <text evidence="9 12">Increases rapidly between 1 and 4 days after seed germination (PubMed:16813579). In roots, accumulates transiently during flower buds initiation (PubMed:29872026). In leaves, mainly observed after budding (PubMed:29872026). High levels in stems and capsules (walls and content), especially after flowering (PubMed:29872026).</text>
</comment>
<comment type="disruption phenotype">
    <text evidence="8 10">Plants silenced for all codeinone reductase proteins accumulate the precursor alkaloid (S)-reticuline at the expense of morphine, codeine, oripavine and thebaine.</text>
</comment>
<comment type="biotechnology">
    <text evidence="11">In yeast (Saccharomyces cerevisiae) engineered to produce opiate alkaloids, the expression of COR proteins leads to the accumulation of neopine and neomorphine as major products.</text>
</comment>
<comment type="similarity">
    <text evidence="15">Belongs to the aldo/keto reductase family.</text>
</comment>